<accession>Q6KI56</accession>
<evidence type="ECO:0000255" key="1">
    <source>
        <dbReference type="HAMAP-Rule" id="MF_00508"/>
    </source>
</evidence>
<evidence type="ECO:0000305" key="2"/>
<comment type="function">
    <text evidence="1">Involved in the binding of tRNA to the ribosomes.</text>
</comment>
<comment type="subunit">
    <text evidence="1">Part of the 30S ribosomal subunit.</text>
</comment>
<comment type="similarity">
    <text evidence="1">Belongs to the universal ribosomal protein uS10 family.</text>
</comment>
<proteinExistence type="inferred from homology"/>
<gene>
    <name evidence="1" type="primary">rpsJ</name>
    <name type="ordered locus">MMOB2340</name>
</gene>
<sequence>MSKIKIKLKSFDADLIEEVSKKFVAFAKSKDIKMSGPIPLPTKIERITILRSVHVNKDSREQFESRTHKRLIIFENLDKKMLDALKRQEISTGVQVEIKEIN</sequence>
<organism>
    <name type="scientific">Mycoplasma mobile (strain ATCC 43663 / 163K / NCTC 11711)</name>
    <name type="common">Mesomycoplasma mobile</name>
    <dbReference type="NCBI Taxonomy" id="267748"/>
    <lineage>
        <taxon>Bacteria</taxon>
        <taxon>Bacillati</taxon>
        <taxon>Mycoplasmatota</taxon>
        <taxon>Mycoplasmoidales</taxon>
        <taxon>Metamycoplasmataceae</taxon>
        <taxon>Mesomycoplasma</taxon>
    </lineage>
</organism>
<keyword id="KW-1185">Reference proteome</keyword>
<keyword id="KW-0687">Ribonucleoprotein</keyword>
<keyword id="KW-0689">Ribosomal protein</keyword>
<protein>
    <recommendedName>
        <fullName evidence="1">Small ribosomal subunit protein uS10</fullName>
    </recommendedName>
    <alternativeName>
        <fullName evidence="2">30S ribosomal protein S10</fullName>
    </alternativeName>
</protein>
<dbReference type="EMBL" id="AE017308">
    <property type="protein sequence ID" value="AAT27720.1"/>
    <property type="molecule type" value="Genomic_DNA"/>
</dbReference>
<dbReference type="RefSeq" id="WP_011264754.1">
    <property type="nucleotide sequence ID" value="NC_006908.1"/>
</dbReference>
<dbReference type="SMR" id="Q6KI56"/>
<dbReference type="STRING" id="267748.MMOB2340"/>
<dbReference type="KEGG" id="mmo:MMOB2340"/>
<dbReference type="eggNOG" id="COG0051">
    <property type="taxonomic scope" value="Bacteria"/>
</dbReference>
<dbReference type="HOGENOM" id="CLU_122625_1_3_14"/>
<dbReference type="OrthoDB" id="9804464at2"/>
<dbReference type="Proteomes" id="UP000009072">
    <property type="component" value="Chromosome"/>
</dbReference>
<dbReference type="GO" id="GO:1990904">
    <property type="term" value="C:ribonucleoprotein complex"/>
    <property type="evidence" value="ECO:0007669"/>
    <property type="project" value="UniProtKB-KW"/>
</dbReference>
<dbReference type="GO" id="GO:0005840">
    <property type="term" value="C:ribosome"/>
    <property type="evidence" value="ECO:0007669"/>
    <property type="project" value="UniProtKB-KW"/>
</dbReference>
<dbReference type="GO" id="GO:0003735">
    <property type="term" value="F:structural constituent of ribosome"/>
    <property type="evidence" value="ECO:0007669"/>
    <property type="project" value="InterPro"/>
</dbReference>
<dbReference type="GO" id="GO:0000049">
    <property type="term" value="F:tRNA binding"/>
    <property type="evidence" value="ECO:0007669"/>
    <property type="project" value="UniProtKB-UniRule"/>
</dbReference>
<dbReference type="GO" id="GO:0006412">
    <property type="term" value="P:translation"/>
    <property type="evidence" value="ECO:0007669"/>
    <property type="project" value="UniProtKB-UniRule"/>
</dbReference>
<dbReference type="FunFam" id="3.30.70.600:FF:000003">
    <property type="entry name" value="30S ribosomal protein S10"/>
    <property type="match status" value="1"/>
</dbReference>
<dbReference type="Gene3D" id="3.30.70.600">
    <property type="entry name" value="Ribosomal protein S10 domain"/>
    <property type="match status" value="1"/>
</dbReference>
<dbReference type="HAMAP" id="MF_00508">
    <property type="entry name" value="Ribosomal_uS10"/>
    <property type="match status" value="1"/>
</dbReference>
<dbReference type="InterPro" id="IPR001848">
    <property type="entry name" value="Ribosomal_uS10"/>
</dbReference>
<dbReference type="InterPro" id="IPR018268">
    <property type="entry name" value="Ribosomal_uS10_CS"/>
</dbReference>
<dbReference type="InterPro" id="IPR027486">
    <property type="entry name" value="Ribosomal_uS10_dom"/>
</dbReference>
<dbReference type="InterPro" id="IPR036838">
    <property type="entry name" value="Ribosomal_uS10_dom_sf"/>
</dbReference>
<dbReference type="NCBIfam" id="NF001861">
    <property type="entry name" value="PRK00596.1"/>
    <property type="match status" value="1"/>
</dbReference>
<dbReference type="NCBIfam" id="TIGR01049">
    <property type="entry name" value="rpsJ_bact"/>
    <property type="match status" value="1"/>
</dbReference>
<dbReference type="PANTHER" id="PTHR11700">
    <property type="entry name" value="30S RIBOSOMAL PROTEIN S10 FAMILY MEMBER"/>
    <property type="match status" value="1"/>
</dbReference>
<dbReference type="Pfam" id="PF00338">
    <property type="entry name" value="Ribosomal_S10"/>
    <property type="match status" value="1"/>
</dbReference>
<dbReference type="PRINTS" id="PR00971">
    <property type="entry name" value="RIBOSOMALS10"/>
</dbReference>
<dbReference type="SMART" id="SM01403">
    <property type="entry name" value="Ribosomal_S10"/>
    <property type="match status" value="1"/>
</dbReference>
<dbReference type="SUPFAM" id="SSF54999">
    <property type="entry name" value="Ribosomal protein S10"/>
    <property type="match status" value="1"/>
</dbReference>
<dbReference type="PROSITE" id="PS00361">
    <property type="entry name" value="RIBOSOMAL_S10"/>
    <property type="match status" value="1"/>
</dbReference>
<feature type="chain" id="PRO_0000237065" description="Small ribosomal subunit protein uS10">
    <location>
        <begin position="1"/>
        <end position="102"/>
    </location>
</feature>
<name>RS10_MYCM1</name>
<reference key="1">
    <citation type="journal article" date="2004" name="Genome Res.">
        <title>The complete genome and proteome of Mycoplasma mobile.</title>
        <authorList>
            <person name="Jaffe J.D."/>
            <person name="Stange-Thomann N."/>
            <person name="Smith C."/>
            <person name="DeCaprio D."/>
            <person name="Fisher S."/>
            <person name="Butler J."/>
            <person name="Calvo S."/>
            <person name="Elkins T."/>
            <person name="FitzGerald M.G."/>
            <person name="Hafez N."/>
            <person name="Kodira C.D."/>
            <person name="Major J."/>
            <person name="Wang S."/>
            <person name="Wilkinson J."/>
            <person name="Nicol R."/>
            <person name="Nusbaum C."/>
            <person name="Birren B."/>
            <person name="Berg H.C."/>
            <person name="Church G.M."/>
        </authorList>
    </citation>
    <scope>NUCLEOTIDE SEQUENCE [LARGE SCALE GENOMIC DNA]</scope>
    <source>
        <strain>ATCC 43663 / NCTC 11711 / 163 K</strain>
    </source>
</reference>